<dbReference type="EMBL" id="CP000849">
    <property type="protein sequence ID" value="ABV79297.1"/>
    <property type="molecule type" value="Genomic_DNA"/>
</dbReference>
<dbReference type="SMR" id="A8GWS0"/>
<dbReference type="KEGG" id="rbo:A1I_04800"/>
<dbReference type="HOGENOM" id="CLU_108953_0_1_5"/>
<dbReference type="GO" id="GO:0005829">
    <property type="term" value="C:cytosol"/>
    <property type="evidence" value="ECO:0007669"/>
    <property type="project" value="TreeGrafter"/>
</dbReference>
<dbReference type="GO" id="GO:0003723">
    <property type="term" value="F:RNA binding"/>
    <property type="evidence" value="ECO:0007669"/>
    <property type="project" value="UniProtKB-UniRule"/>
</dbReference>
<dbReference type="GO" id="GO:0070929">
    <property type="term" value="P:trans-translation"/>
    <property type="evidence" value="ECO:0007669"/>
    <property type="project" value="UniProtKB-UniRule"/>
</dbReference>
<dbReference type="CDD" id="cd09294">
    <property type="entry name" value="SmpB"/>
    <property type="match status" value="1"/>
</dbReference>
<dbReference type="Gene3D" id="2.40.280.10">
    <property type="match status" value="1"/>
</dbReference>
<dbReference type="HAMAP" id="MF_00023">
    <property type="entry name" value="SmpB"/>
    <property type="match status" value="1"/>
</dbReference>
<dbReference type="InterPro" id="IPR023620">
    <property type="entry name" value="SmpB"/>
</dbReference>
<dbReference type="InterPro" id="IPR000037">
    <property type="entry name" value="SsrA-bd_prot"/>
</dbReference>
<dbReference type="InterPro" id="IPR020081">
    <property type="entry name" value="SsrA-bd_prot_CS"/>
</dbReference>
<dbReference type="NCBIfam" id="NF003843">
    <property type="entry name" value="PRK05422.1"/>
    <property type="match status" value="1"/>
</dbReference>
<dbReference type="NCBIfam" id="TIGR00086">
    <property type="entry name" value="smpB"/>
    <property type="match status" value="1"/>
</dbReference>
<dbReference type="PANTHER" id="PTHR30308:SF2">
    <property type="entry name" value="SSRA-BINDING PROTEIN"/>
    <property type="match status" value="1"/>
</dbReference>
<dbReference type="PANTHER" id="PTHR30308">
    <property type="entry name" value="TMRNA-BINDING COMPONENT OF TRANS-TRANSLATION TAGGING COMPLEX"/>
    <property type="match status" value="1"/>
</dbReference>
<dbReference type="Pfam" id="PF01668">
    <property type="entry name" value="SmpB"/>
    <property type="match status" value="1"/>
</dbReference>
<dbReference type="SUPFAM" id="SSF74982">
    <property type="entry name" value="Small protein B (SmpB)"/>
    <property type="match status" value="1"/>
</dbReference>
<dbReference type="PROSITE" id="PS01317">
    <property type="entry name" value="SSRP"/>
    <property type="match status" value="1"/>
</dbReference>
<organism>
    <name type="scientific">Rickettsia bellii (strain OSU 85-389)</name>
    <dbReference type="NCBI Taxonomy" id="391896"/>
    <lineage>
        <taxon>Bacteria</taxon>
        <taxon>Pseudomonadati</taxon>
        <taxon>Pseudomonadota</taxon>
        <taxon>Alphaproteobacteria</taxon>
        <taxon>Rickettsiales</taxon>
        <taxon>Rickettsiaceae</taxon>
        <taxon>Rickettsieae</taxon>
        <taxon>Rickettsia</taxon>
        <taxon>belli group</taxon>
    </lineage>
</organism>
<proteinExistence type="inferred from homology"/>
<comment type="function">
    <text evidence="1">Required for rescue of stalled ribosomes mediated by trans-translation. Binds to transfer-messenger RNA (tmRNA), required for stable association of tmRNA with ribosomes. tmRNA and SmpB together mimic tRNA shape, replacing the anticodon stem-loop with SmpB. tmRNA is encoded by the ssrA gene; the 2 termini fold to resemble tRNA(Ala) and it encodes a 'tag peptide', a short internal open reading frame. During trans-translation Ala-aminoacylated tmRNA acts like a tRNA, entering the A-site of stalled ribosomes, displacing the stalled mRNA. The ribosome then switches to translate the ORF on the tmRNA; the nascent peptide is terminated with the 'tag peptide' encoded by the tmRNA and targeted for degradation. The ribosome is freed to recommence translation, which seems to be the essential function of trans-translation.</text>
</comment>
<comment type="subcellular location">
    <subcellularLocation>
        <location evidence="1">Cytoplasm</location>
    </subcellularLocation>
    <text evidence="1">The tmRNA-SmpB complex associates with stalled 70S ribosomes.</text>
</comment>
<comment type="similarity">
    <text evidence="1">Belongs to the SmpB family.</text>
</comment>
<name>SSRP_RICB8</name>
<reference key="1">
    <citation type="submission" date="2007-09" db="EMBL/GenBank/DDBJ databases">
        <title>Complete genome sequencing of Rickettsia bellii.</title>
        <authorList>
            <person name="Madan A."/>
            <person name="Lee H."/>
            <person name="Madan A."/>
            <person name="Yoon J.-G."/>
            <person name="Ryu G.-Y."/>
            <person name="Dasch G."/>
            <person name="Ereemeva M."/>
        </authorList>
    </citation>
    <scope>NUCLEOTIDE SEQUENCE [LARGE SCALE GENOMIC DNA]</scope>
    <source>
        <strain>OSU 85-389</strain>
    </source>
</reference>
<gene>
    <name evidence="1" type="primary">smpB</name>
    <name type="ordered locus">A1I_04800</name>
</gene>
<sequence>MEYKKIIAQNKKALFNYFIEERLEAGIVLKGSEVQSLRQGKASIEESHAADTGNEVFLYNCHIAEYEKANRFNHSTRRPRKLLLHKKEINKIIGRTKIKGYTLVALSMYFNKKNKIKIELGIAKGKKLHDKRESIKEKDWKRDQSRLIRQK</sequence>
<evidence type="ECO:0000255" key="1">
    <source>
        <dbReference type="HAMAP-Rule" id="MF_00023"/>
    </source>
</evidence>
<evidence type="ECO:0000256" key="2">
    <source>
        <dbReference type="SAM" id="MobiDB-lite"/>
    </source>
</evidence>
<keyword id="KW-0963">Cytoplasm</keyword>
<keyword id="KW-0694">RNA-binding</keyword>
<protein>
    <recommendedName>
        <fullName evidence="1">SsrA-binding protein</fullName>
    </recommendedName>
    <alternativeName>
        <fullName evidence="1">Small protein B</fullName>
    </alternativeName>
</protein>
<feature type="chain" id="PRO_0000331088" description="SsrA-binding protein">
    <location>
        <begin position="1"/>
        <end position="151"/>
    </location>
</feature>
<feature type="region of interest" description="Disordered" evidence="2">
    <location>
        <begin position="131"/>
        <end position="151"/>
    </location>
</feature>
<accession>A8GWS0</accession>